<gene>
    <name evidence="1" type="primary">ileS</name>
    <name type="ordered locus">DSY2882</name>
</gene>
<dbReference type="EC" id="6.1.1.5" evidence="1"/>
<dbReference type="EMBL" id="AP008230">
    <property type="protein sequence ID" value="BAE84671.1"/>
    <property type="molecule type" value="Genomic_DNA"/>
</dbReference>
<dbReference type="RefSeq" id="WP_011460677.1">
    <property type="nucleotide sequence ID" value="NC_007907.1"/>
</dbReference>
<dbReference type="SMR" id="Q24TH1"/>
<dbReference type="STRING" id="138119.DSY2882"/>
<dbReference type="KEGG" id="dsy:DSY2882"/>
<dbReference type="eggNOG" id="COG0060">
    <property type="taxonomic scope" value="Bacteria"/>
</dbReference>
<dbReference type="HOGENOM" id="CLU_001493_7_0_9"/>
<dbReference type="Proteomes" id="UP000001946">
    <property type="component" value="Chromosome"/>
</dbReference>
<dbReference type="GO" id="GO:0005829">
    <property type="term" value="C:cytosol"/>
    <property type="evidence" value="ECO:0007669"/>
    <property type="project" value="TreeGrafter"/>
</dbReference>
<dbReference type="GO" id="GO:0002161">
    <property type="term" value="F:aminoacyl-tRNA deacylase activity"/>
    <property type="evidence" value="ECO:0007669"/>
    <property type="project" value="InterPro"/>
</dbReference>
<dbReference type="GO" id="GO:0005524">
    <property type="term" value="F:ATP binding"/>
    <property type="evidence" value="ECO:0007669"/>
    <property type="project" value="UniProtKB-UniRule"/>
</dbReference>
<dbReference type="GO" id="GO:0004822">
    <property type="term" value="F:isoleucine-tRNA ligase activity"/>
    <property type="evidence" value="ECO:0007669"/>
    <property type="project" value="UniProtKB-UniRule"/>
</dbReference>
<dbReference type="GO" id="GO:0000049">
    <property type="term" value="F:tRNA binding"/>
    <property type="evidence" value="ECO:0007669"/>
    <property type="project" value="InterPro"/>
</dbReference>
<dbReference type="GO" id="GO:0008270">
    <property type="term" value="F:zinc ion binding"/>
    <property type="evidence" value="ECO:0007669"/>
    <property type="project" value="UniProtKB-UniRule"/>
</dbReference>
<dbReference type="GO" id="GO:0006428">
    <property type="term" value="P:isoleucyl-tRNA aminoacylation"/>
    <property type="evidence" value="ECO:0007669"/>
    <property type="project" value="UniProtKB-UniRule"/>
</dbReference>
<dbReference type="CDD" id="cd07960">
    <property type="entry name" value="Anticodon_Ia_Ile_BEm"/>
    <property type="match status" value="1"/>
</dbReference>
<dbReference type="CDD" id="cd00818">
    <property type="entry name" value="IleRS_core"/>
    <property type="match status" value="1"/>
</dbReference>
<dbReference type="FunFam" id="1.10.730.20:FF:000001">
    <property type="entry name" value="Isoleucine--tRNA ligase"/>
    <property type="match status" value="1"/>
</dbReference>
<dbReference type="FunFam" id="3.40.50.620:FF:000152">
    <property type="entry name" value="Isoleucine--tRNA ligase"/>
    <property type="match status" value="1"/>
</dbReference>
<dbReference type="Gene3D" id="1.10.730.20">
    <property type="match status" value="1"/>
</dbReference>
<dbReference type="Gene3D" id="2.170.220.10">
    <property type="match status" value="1"/>
</dbReference>
<dbReference type="Gene3D" id="3.40.50.620">
    <property type="entry name" value="HUPs"/>
    <property type="match status" value="2"/>
</dbReference>
<dbReference type="Gene3D" id="1.10.10.830">
    <property type="entry name" value="Ile-tRNA synthetase CP2 domain-like"/>
    <property type="match status" value="1"/>
</dbReference>
<dbReference type="Gene3D" id="3.90.740.10">
    <property type="entry name" value="Valyl/Leucyl/Isoleucyl-tRNA synthetase, editing domain"/>
    <property type="match status" value="1"/>
</dbReference>
<dbReference type="HAMAP" id="MF_02002">
    <property type="entry name" value="Ile_tRNA_synth_type1"/>
    <property type="match status" value="1"/>
</dbReference>
<dbReference type="InterPro" id="IPR001412">
    <property type="entry name" value="aa-tRNA-synth_I_CS"/>
</dbReference>
<dbReference type="InterPro" id="IPR002300">
    <property type="entry name" value="aa-tRNA-synth_Ia"/>
</dbReference>
<dbReference type="InterPro" id="IPR033708">
    <property type="entry name" value="Anticodon_Ile_BEm"/>
</dbReference>
<dbReference type="InterPro" id="IPR002301">
    <property type="entry name" value="Ile-tRNA-ligase"/>
</dbReference>
<dbReference type="InterPro" id="IPR023585">
    <property type="entry name" value="Ile-tRNA-ligase_type1"/>
</dbReference>
<dbReference type="InterPro" id="IPR050081">
    <property type="entry name" value="Ile-tRNA_ligase"/>
</dbReference>
<dbReference type="InterPro" id="IPR013155">
    <property type="entry name" value="M/V/L/I-tRNA-synth_anticd-bd"/>
</dbReference>
<dbReference type="InterPro" id="IPR014729">
    <property type="entry name" value="Rossmann-like_a/b/a_fold"/>
</dbReference>
<dbReference type="InterPro" id="IPR009080">
    <property type="entry name" value="tRNAsynth_Ia_anticodon-bd"/>
</dbReference>
<dbReference type="InterPro" id="IPR009008">
    <property type="entry name" value="Val/Leu/Ile-tRNA-synth_edit"/>
</dbReference>
<dbReference type="InterPro" id="IPR010663">
    <property type="entry name" value="Znf_FPG/IleRS"/>
</dbReference>
<dbReference type="NCBIfam" id="TIGR00392">
    <property type="entry name" value="ileS"/>
    <property type="match status" value="1"/>
</dbReference>
<dbReference type="PANTHER" id="PTHR42765:SF1">
    <property type="entry name" value="ISOLEUCINE--TRNA LIGASE, MITOCHONDRIAL"/>
    <property type="match status" value="1"/>
</dbReference>
<dbReference type="PANTHER" id="PTHR42765">
    <property type="entry name" value="SOLEUCYL-TRNA SYNTHETASE"/>
    <property type="match status" value="1"/>
</dbReference>
<dbReference type="Pfam" id="PF08264">
    <property type="entry name" value="Anticodon_1"/>
    <property type="match status" value="1"/>
</dbReference>
<dbReference type="Pfam" id="PF00133">
    <property type="entry name" value="tRNA-synt_1"/>
    <property type="match status" value="1"/>
</dbReference>
<dbReference type="Pfam" id="PF06827">
    <property type="entry name" value="zf-FPG_IleRS"/>
    <property type="match status" value="1"/>
</dbReference>
<dbReference type="PRINTS" id="PR00984">
    <property type="entry name" value="TRNASYNTHILE"/>
</dbReference>
<dbReference type="SUPFAM" id="SSF47323">
    <property type="entry name" value="Anticodon-binding domain of a subclass of class I aminoacyl-tRNA synthetases"/>
    <property type="match status" value="1"/>
</dbReference>
<dbReference type="SUPFAM" id="SSF52374">
    <property type="entry name" value="Nucleotidylyl transferase"/>
    <property type="match status" value="1"/>
</dbReference>
<dbReference type="SUPFAM" id="SSF50677">
    <property type="entry name" value="ValRS/IleRS/LeuRS editing domain"/>
    <property type="match status" value="1"/>
</dbReference>
<dbReference type="PROSITE" id="PS00178">
    <property type="entry name" value="AA_TRNA_LIGASE_I"/>
    <property type="match status" value="1"/>
</dbReference>
<feature type="chain" id="PRO_1000022059" description="Isoleucine--tRNA ligase">
    <location>
        <begin position="1"/>
        <end position="922"/>
    </location>
</feature>
<feature type="short sequence motif" description="'HIGH' region">
    <location>
        <begin position="57"/>
        <end position="67"/>
    </location>
</feature>
<feature type="short sequence motif" description="'KMSKS' region">
    <location>
        <begin position="594"/>
        <end position="598"/>
    </location>
</feature>
<feature type="binding site" evidence="1">
    <location>
        <position position="553"/>
    </location>
    <ligand>
        <name>L-isoleucyl-5'-AMP</name>
        <dbReference type="ChEBI" id="CHEBI:178002"/>
    </ligand>
</feature>
<feature type="binding site" evidence="1">
    <location>
        <position position="597"/>
    </location>
    <ligand>
        <name>ATP</name>
        <dbReference type="ChEBI" id="CHEBI:30616"/>
    </ligand>
</feature>
<feature type="binding site" evidence="1">
    <location>
        <position position="892"/>
    </location>
    <ligand>
        <name>Zn(2+)</name>
        <dbReference type="ChEBI" id="CHEBI:29105"/>
    </ligand>
</feature>
<feature type="binding site" evidence="1">
    <location>
        <position position="895"/>
    </location>
    <ligand>
        <name>Zn(2+)</name>
        <dbReference type="ChEBI" id="CHEBI:29105"/>
    </ligand>
</feature>
<feature type="binding site" evidence="1">
    <location>
        <position position="912"/>
    </location>
    <ligand>
        <name>Zn(2+)</name>
        <dbReference type="ChEBI" id="CHEBI:29105"/>
    </ligand>
</feature>
<feature type="binding site" evidence="1">
    <location>
        <position position="915"/>
    </location>
    <ligand>
        <name>Zn(2+)</name>
        <dbReference type="ChEBI" id="CHEBI:29105"/>
    </ligand>
</feature>
<organism>
    <name type="scientific">Desulfitobacterium hafniense (strain Y51)</name>
    <dbReference type="NCBI Taxonomy" id="138119"/>
    <lineage>
        <taxon>Bacteria</taxon>
        <taxon>Bacillati</taxon>
        <taxon>Bacillota</taxon>
        <taxon>Clostridia</taxon>
        <taxon>Eubacteriales</taxon>
        <taxon>Desulfitobacteriaceae</taxon>
        <taxon>Desulfitobacterium</taxon>
    </lineage>
</organism>
<protein>
    <recommendedName>
        <fullName evidence="1">Isoleucine--tRNA ligase</fullName>
        <ecNumber evidence="1">6.1.1.5</ecNumber>
    </recommendedName>
    <alternativeName>
        <fullName evidence="1">Isoleucyl-tRNA synthetase</fullName>
        <shortName evidence="1">IleRS</shortName>
    </alternativeName>
</protein>
<comment type="function">
    <text evidence="1">Catalyzes the attachment of isoleucine to tRNA(Ile). As IleRS can inadvertently accommodate and process structurally similar amino acids such as valine, to avoid such errors it has two additional distinct tRNA(Ile)-dependent editing activities. One activity is designated as 'pretransfer' editing and involves the hydrolysis of activated Val-AMP. The other activity is designated 'posttransfer' editing and involves deacylation of mischarged Val-tRNA(Ile).</text>
</comment>
<comment type="catalytic activity">
    <reaction evidence="1">
        <text>tRNA(Ile) + L-isoleucine + ATP = L-isoleucyl-tRNA(Ile) + AMP + diphosphate</text>
        <dbReference type="Rhea" id="RHEA:11060"/>
        <dbReference type="Rhea" id="RHEA-COMP:9666"/>
        <dbReference type="Rhea" id="RHEA-COMP:9695"/>
        <dbReference type="ChEBI" id="CHEBI:30616"/>
        <dbReference type="ChEBI" id="CHEBI:33019"/>
        <dbReference type="ChEBI" id="CHEBI:58045"/>
        <dbReference type="ChEBI" id="CHEBI:78442"/>
        <dbReference type="ChEBI" id="CHEBI:78528"/>
        <dbReference type="ChEBI" id="CHEBI:456215"/>
        <dbReference type="EC" id="6.1.1.5"/>
    </reaction>
</comment>
<comment type="cofactor">
    <cofactor evidence="1">
        <name>Zn(2+)</name>
        <dbReference type="ChEBI" id="CHEBI:29105"/>
    </cofactor>
    <text evidence="1">Binds 1 zinc ion per subunit.</text>
</comment>
<comment type="subunit">
    <text evidence="1">Monomer.</text>
</comment>
<comment type="subcellular location">
    <subcellularLocation>
        <location evidence="1">Cytoplasm</location>
    </subcellularLocation>
</comment>
<comment type="domain">
    <text evidence="1">IleRS has two distinct active sites: one for aminoacylation and one for editing. The misactivated valine is translocated from the active site to the editing site, which sterically excludes the correctly activated isoleucine. The single editing site contains two valyl binding pockets, one specific for each substrate (Val-AMP or Val-tRNA(Ile)).</text>
</comment>
<comment type="similarity">
    <text evidence="1">Belongs to the class-I aminoacyl-tRNA synthetase family. IleS type 1 subfamily.</text>
</comment>
<name>SYI_DESHY</name>
<keyword id="KW-0030">Aminoacyl-tRNA synthetase</keyword>
<keyword id="KW-0067">ATP-binding</keyword>
<keyword id="KW-0963">Cytoplasm</keyword>
<keyword id="KW-0436">Ligase</keyword>
<keyword id="KW-0479">Metal-binding</keyword>
<keyword id="KW-0547">Nucleotide-binding</keyword>
<keyword id="KW-0648">Protein biosynthesis</keyword>
<keyword id="KW-1185">Reference proteome</keyword>
<keyword id="KW-0862">Zinc</keyword>
<accession>Q24TH1</accession>
<sequence length="922" mass="104696">MDYRNTLNLPETDFPMRGNLPQREPEILQKWEEEDIYATVQKARAGRPKFVLHDGPPYANGDIHLGHALNKVIKDIIVKYKTMAGFDAPYVPGWDTHGLPIEQQVIKKLGVNRHAVSVVEFRRMCKEYAKKYISIQKEQFKRLGVRGDWKNPYLTLEKEYEAAQIGVFGKMARKKYIYKGLKPVYWCPSCETALAEAEIEYAEKTSHAIYVKFPVKEGKGVLTDENTFVIIWTTTPWTLPANLAITLHEEFSYVQVQVEKEHWLVAEGMLESLRSLWNLELPVEKRFVGKELEGVICKHPFIERDSVLILGEHVTLEAGTGCVHTAPGHGEEDFNVGKKYGLPVLCPVDHQGKFTAEGGAYAGMKVDKANPVIIEDLKNLHALVHEDKIKHSYAHCWRCNNPIIYRATEQWFASIDGFRKAALEEIDKVQWIPSWGKDRIYNMIADRGDWCISRQRTWGVPIPIFYCEDCGKEIISDETIAKVQEIFREEGSDAWFLRPAAELLPEGFTCACGGKSFRKETDIMDVWFDSGTSHTSVLMERKELAWPADLYMEGSDQHRGWFNSSLSTSVAAYGKAPYKAVLTHGFLVDEKGRKMSKSLGNGVDPLQVTKEMGADILRLWVCAADYKNDVAVSPRIMKQMSEAYRKIRNTLRFLLSNLNDFDPAKDRVAYKDLPEIDRWALLQLGKVTQRVLQGYEKYEFHWVYHSVHNFCAVELSAIYLDIVKDRLYVEGKNSTLRRASQTVLYDVLNALVRLMAPVLTYTADEIWPYVPGVPAGSHVQTEEMPEALPQWLDEALEKKWDTLLAVRSEVTKALEKARQDKLINHPLTAQVDLYPNAELEGFLRGIPNLSEIFIVSAVQLHSAGEEKPEGLSMAEDLAGFGIAVNSAAGEKCERCWIYDTGVGENQEHPTLCPRCASVVSHL</sequence>
<reference key="1">
    <citation type="journal article" date="2006" name="J. Bacteriol.">
        <title>Complete genome sequence of the dehalorespiring bacterium Desulfitobacterium hafniense Y51 and comparison with Dehalococcoides ethenogenes 195.</title>
        <authorList>
            <person name="Nonaka H."/>
            <person name="Keresztes G."/>
            <person name="Shinoda Y."/>
            <person name="Ikenaga Y."/>
            <person name="Abe M."/>
            <person name="Naito K."/>
            <person name="Inatomi K."/>
            <person name="Furukawa K."/>
            <person name="Inui M."/>
            <person name="Yukawa H."/>
        </authorList>
    </citation>
    <scope>NUCLEOTIDE SEQUENCE [LARGE SCALE GENOMIC DNA]</scope>
    <source>
        <strain>Y51</strain>
    </source>
</reference>
<proteinExistence type="inferred from homology"/>
<evidence type="ECO:0000255" key="1">
    <source>
        <dbReference type="HAMAP-Rule" id="MF_02002"/>
    </source>
</evidence>